<keyword id="KW-0009">Actin-binding</keyword>
<keyword id="KW-0025">Alternative splicing</keyword>
<keyword id="KW-0067">ATP-binding</keyword>
<keyword id="KW-0112">Calmodulin-binding</keyword>
<keyword id="KW-0175">Coiled coil</keyword>
<keyword id="KW-0963">Cytoplasm</keyword>
<keyword id="KW-0472">Membrane</keyword>
<keyword id="KW-0505">Motor protein</keyword>
<keyword id="KW-0518">Myosin</keyword>
<keyword id="KW-0547">Nucleotide-binding</keyword>
<keyword id="KW-0539">Nucleus</keyword>
<keyword id="KW-1185">Reference proteome</keyword>
<keyword id="KW-0677">Repeat</keyword>
<name>MYO15_ARATH</name>
<gene>
    <name type="primary">XI-I</name>
    <name evidence="15" type="synonym">KAKU1</name>
    <name evidence="17" type="ordered locus">At4g33200</name>
    <name evidence="18" type="ORF">F4I10.130</name>
</gene>
<dbReference type="EMBL" id="AL035525">
    <property type="protein sequence ID" value="CAB36794.2"/>
    <property type="status" value="ALT_SEQ"/>
    <property type="molecule type" value="Genomic_DNA"/>
</dbReference>
<dbReference type="EMBL" id="AL161583">
    <property type="protein sequence ID" value="CAB80037.1"/>
    <property type="status" value="ALT_SEQ"/>
    <property type="molecule type" value="Genomic_DNA"/>
</dbReference>
<dbReference type="EMBL" id="CP002687">
    <property type="protein sequence ID" value="AEE86188.1"/>
    <property type="molecule type" value="Genomic_DNA"/>
</dbReference>
<dbReference type="EMBL" id="AK228969">
    <property type="protein sequence ID" value="BAF00858.1"/>
    <property type="molecule type" value="mRNA"/>
</dbReference>
<dbReference type="PIR" id="D85390">
    <property type="entry name" value="D85390"/>
</dbReference>
<dbReference type="PIR" id="T05200">
    <property type="entry name" value="T05200"/>
</dbReference>
<dbReference type="RefSeq" id="NP_195046.3">
    <molecule id="Q0WPU1-1"/>
    <property type="nucleotide sequence ID" value="NM_119474.5"/>
</dbReference>
<dbReference type="SMR" id="Q0WPU1"/>
<dbReference type="BioGRID" id="14741">
    <property type="interactions" value="3"/>
</dbReference>
<dbReference type="FunCoup" id="Q0WPU1">
    <property type="interactions" value="1726"/>
</dbReference>
<dbReference type="STRING" id="3702.Q0WPU1"/>
<dbReference type="GlyGen" id="Q0WPU1">
    <property type="glycosylation" value="1 site"/>
</dbReference>
<dbReference type="iPTMnet" id="Q0WPU1"/>
<dbReference type="PaxDb" id="3702-AT4G33200.1"/>
<dbReference type="ProteomicsDB" id="251007">
    <molecule id="Q0WPU1-1"/>
</dbReference>
<dbReference type="EnsemblPlants" id="AT4G33200.1">
    <molecule id="Q0WPU1-1"/>
    <property type="protein sequence ID" value="AT4G33200.1"/>
    <property type="gene ID" value="AT4G33200"/>
</dbReference>
<dbReference type="GeneID" id="829456"/>
<dbReference type="Gramene" id="AT4G33200.1">
    <molecule id="Q0WPU1-1"/>
    <property type="protein sequence ID" value="AT4G33200.1"/>
    <property type="gene ID" value="AT4G33200"/>
</dbReference>
<dbReference type="KEGG" id="ath:AT4G33200"/>
<dbReference type="Araport" id="AT4G33200"/>
<dbReference type="TAIR" id="AT4G33200">
    <property type="gene designation" value="XI-I"/>
</dbReference>
<dbReference type="eggNOG" id="KOG0160">
    <property type="taxonomic scope" value="Eukaryota"/>
</dbReference>
<dbReference type="InParanoid" id="Q0WPU1"/>
<dbReference type="PhylomeDB" id="Q0WPU1"/>
<dbReference type="PRO" id="PR:Q0WPU1"/>
<dbReference type="Proteomes" id="UP000006548">
    <property type="component" value="Chromosome 4"/>
</dbReference>
<dbReference type="ExpressionAtlas" id="Q0WPU1">
    <property type="expression patterns" value="baseline and differential"/>
</dbReference>
<dbReference type="GO" id="GO:0005737">
    <property type="term" value="C:cytoplasm"/>
    <property type="evidence" value="ECO:0007669"/>
    <property type="project" value="UniProtKB-SubCell"/>
</dbReference>
<dbReference type="GO" id="GO:0016459">
    <property type="term" value="C:myosin complex"/>
    <property type="evidence" value="ECO:0007669"/>
    <property type="project" value="UniProtKB-KW"/>
</dbReference>
<dbReference type="GO" id="GO:0031965">
    <property type="term" value="C:nuclear membrane"/>
    <property type="evidence" value="ECO:0000314"/>
    <property type="project" value="UniProtKB"/>
</dbReference>
<dbReference type="GO" id="GO:0003779">
    <property type="term" value="F:actin binding"/>
    <property type="evidence" value="ECO:0007669"/>
    <property type="project" value="UniProtKB-KW"/>
</dbReference>
<dbReference type="GO" id="GO:0005524">
    <property type="term" value="F:ATP binding"/>
    <property type="evidence" value="ECO:0007669"/>
    <property type="project" value="UniProtKB-KW"/>
</dbReference>
<dbReference type="GO" id="GO:0005516">
    <property type="term" value="F:calmodulin binding"/>
    <property type="evidence" value="ECO:0007669"/>
    <property type="project" value="UniProtKB-KW"/>
</dbReference>
<dbReference type="GO" id="GO:0003774">
    <property type="term" value="F:cytoskeletal motor activity"/>
    <property type="evidence" value="ECO:0000250"/>
    <property type="project" value="TAIR"/>
</dbReference>
<dbReference type="GO" id="GO:0007015">
    <property type="term" value="P:actin filament organization"/>
    <property type="evidence" value="ECO:0007669"/>
    <property type="project" value="InterPro"/>
</dbReference>
<dbReference type="GO" id="GO:0030048">
    <property type="term" value="P:actin filament-based movement"/>
    <property type="evidence" value="ECO:0000304"/>
    <property type="project" value="TAIR"/>
</dbReference>
<dbReference type="GO" id="GO:0007097">
    <property type="term" value="P:nuclear migration"/>
    <property type="evidence" value="ECO:0000315"/>
    <property type="project" value="UniProtKB"/>
</dbReference>
<dbReference type="GO" id="GO:2000769">
    <property type="term" value="P:regulation of establishment or maintenance of cell polarity regulating cell shape"/>
    <property type="evidence" value="ECO:0000315"/>
    <property type="project" value="UniProtKB"/>
</dbReference>
<dbReference type="CDD" id="cd23767">
    <property type="entry name" value="IQCD"/>
    <property type="match status" value="1"/>
</dbReference>
<dbReference type="CDD" id="cd15475">
    <property type="entry name" value="MyosinXI_CBD"/>
    <property type="match status" value="1"/>
</dbReference>
<dbReference type="CDD" id="cd01384">
    <property type="entry name" value="MYSc_Myo11"/>
    <property type="match status" value="1"/>
</dbReference>
<dbReference type="FunFam" id="1.10.10.820:FF:000001">
    <property type="entry name" value="Myosin heavy chain"/>
    <property type="match status" value="1"/>
</dbReference>
<dbReference type="Gene3D" id="1.10.10.820">
    <property type="match status" value="1"/>
</dbReference>
<dbReference type="Gene3D" id="1.20.5.190">
    <property type="match status" value="3"/>
</dbReference>
<dbReference type="Gene3D" id="1.20.5.340">
    <property type="match status" value="1"/>
</dbReference>
<dbReference type="Gene3D" id="1.20.58.530">
    <property type="match status" value="1"/>
</dbReference>
<dbReference type="Gene3D" id="6.20.240.20">
    <property type="match status" value="1"/>
</dbReference>
<dbReference type="Gene3D" id="3.40.850.10">
    <property type="entry name" value="Kinesin motor domain"/>
    <property type="match status" value="1"/>
</dbReference>
<dbReference type="Gene3D" id="1.20.120.720">
    <property type="entry name" value="Myosin VI head, motor domain, U50 subdomain"/>
    <property type="match status" value="1"/>
</dbReference>
<dbReference type="InterPro" id="IPR002710">
    <property type="entry name" value="Dilute_dom"/>
</dbReference>
<dbReference type="InterPro" id="IPR000048">
    <property type="entry name" value="IQ_motif_EF-hand-BS"/>
</dbReference>
<dbReference type="InterPro" id="IPR036961">
    <property type="entry name" value="Kinesin_motor_dom_sf"/>
</dbReference>
<dbReference type="InterPro" id="IPR001609">
    <property type="entry name" value="Myosin_head_motor_dom-like"/>
</dbReference>
<dbReference type="InterPro" id="IPR004009">
    <property type="entry name" value="Myosin_N"/>
</dbReference>
<dbReference type="InterPro" id="IPR037975">
    <property type="entry name" value="MyosinXI_CBD"/>
</dbReference>
<dbReference type="InterPro" id="IPR036018">
    <property type="entry name" value="MYSc_Myo11"/>
</dbReference>
<dbReference type="InterPro" id="IPR027417">
    <property type="entry name" value="P-loop_NTPase"/>
</dbReference>
<dbReference type="PANTHER" id="PTHR13140">
    <property type="entry name" value="MYOSIN"/>
    <property type="match status" value="1"/>
</dbReference>
<dbReference type="PANTHER" id="PTHR13140:SF781">
    <property type="entry name" value="MYOSIN-15"/>
    <property type="match status" value="1"/>
</dbReference>
<dbReference type="Pfam" id="PF01843">
    <property type="entry name" value="DIL"/>
    <property type="match status" value="1"/>
</dbReference>
<dbReference type="Pfam" id="PF00612">
    <property type="entry name" value="IQ"/>
    <property type="match status" value="4"/>
</dbReference>
<dbReference type="Pfam" id="PF00063">
    <property type="entry name" value="Myosin_head"/>
    <property type="match status" value="1"/>
</dbReference>
<dbReference type="Pfam" id="PF02736">
    <property type="entry name" value="Myosin_N"/>
    <property type="match status" value="1"/>
</dbReference>
<dbReference type="PRINTS" id="PR00193">
    <property type="entry name" value="MYOSINHEAVY"/>
</dbReference>
<dbReference type="SMART" id="SM01132">
    <property type="entry name" value="DIL"/>
    <property type="match status" value="1"/>
</dbReference>
<dbReference type="SMART" id="SM00015">
    <property type="entry name" value="IQ"/>
    <property type="match status" value="5"/>
</dbReference>
<dbReference type="SMART" id="SM00242">
    <property type="entry name" value="MYSc"/>
    <property type="match status" value="1"/>
</dbReference>
<dbReference type="SUPFAM" id="SSF52540">
    <property type="entry name" value="P-loop containing nucleoside triphosphate hydrolases"/>
    <property type="match status" value="2"/>
</dbReference>
<dbReference type="PROSITE" id="PS51126">
    <property type="entry name" value="DILUTE"/>
    <property type="match status" value="1"/>
</dbReference>
<dbReference type="PROSITE" id="PS50096">
    <property type="entry name" value="IQ"/>
    <property type="match status" value="3"/>
</dbReference>
<dbReference type="PROSITE" id="PS51456">
    <property type="entry name" value="MYOSIN_MOTOR"/>
    <property type="match status" value="1"/>
</dbReference>
<dbReference type="PROSITE" id="PS51844">
    <property type="entry name" value="SH3_LIKE"/>
    <property type="match status" value="1"/>
</dbReference>
<reference key="1">
    <citation type="journal article" date="1999" name="Nature">
        <title>Sequence and analysis of chromosome 4 of the plant Arabidopsis thaliana.</title>
        <authorList>
            <person name="Mayer K.F.X."/>
            <person name="Schueller C."/>
            <person name="Wambutt R."/>
            <person name="Murphy G."/>
            <person name="Volckaert G."/>
            <person name="Pohl T."/>
            <person name="Duesterhoeft A."/>
            <person name="Stiekema W."/>
            <person name="Entian K.-D."/>
            <person name="Terryn N."/>
            <person name="Harris B."/>
            <person name="Ansorge W."/>
            <person name="Brandt P."/>
            <person name="Grivell L.A."/>
            <person name="Rieger M."/>
            <person name="Weichselgartner M."/>
            <person name="de Simone V."/>
            <person name="Obermaier B."/>
            <person name="Mache R."/>
            <person name="Mueller M."/>
            <person name="Kreis M."/>
            <person name="Delseny M."/>
            <person name="Puigdomenech P."/>
            <person name="Watson M."/>
            <person name="Schmidtheini T."/>
            <person name="Reichert B."/>
            <person name="Portetelle D."/>
            <person name="Perez-Alonso M."/>
            <person name="Boutry M."/>
            <person name="Bancroft I."/>
            <person name="Vos P."/>
            <person name="Hoheisel J."/>
            <person name="Zimmermann W."/>
            <person name="Wedler H."/>
            <person name="Ridley P."/>
            <person name="Langham S.-A."/>
            <person name="McCullagh B."/>
            <person name="Bilham L."/>
            <person name="Robben J."/>
            <person name="van der Schueren J."/>
            <person name="Grymonprez B."/>
            <person name="Chuang Y.-J."/>
            <person name="Vandenbussche F."/>
            <person name="Braeken M."/>
            <person name="Weltjens I."/>
            <person name="Voet M."/>
            <person name="Bastiaens I."/>
            <person name="Aert R."/>
            <person name="Defoor E."/>
            <person name="Weitzenegger T."/>
            <person name="Bothe G."/>
            <person name="Ramsperger U."/>
            <person name="Hilbert H."/>
            <person name="Braun M."/>
            <person name="Holzer E."/>
            <person name="Brandt A."/>
            <person name="Peters S."/>
            <person name="van Staveren M."/>
            <person name="Dirkse W."/>
            <person name="Mooijman P."/>
            <person name="Klein Lankhorst R."/>
            <person name="Rose M."/>
            <person name="Hauf J."/>
            <person name="Koetter P."/>
            <person name="Berneiser S."/>
            <person name="Hempel S."/>
            <person name="Feldpausch M."/>
            <person name="Lamberth S."/>
            <person name="Van den Daele H."/>
            <person name="De Keyser A."/>
            <person name="Buysshaert C."/>
            <person name="Gielen J."/>
            <person name="Villarroel R."/>
            <person name="De Clercq R."/>
            <person name="van Montagu M."/>
            <person name="Rogers J."/>
            <person name="Cronin A."/>
            <person name="Quail M.A."/>
            <person name="Bray-Allen S."/>
            <person name="Clark L."/>
            <person name="Doggett J."/>
            <person name="Hall S."/>
            <person name="Kay M."/>
            <person name="Lennard N."/>
            <person name="McLay K."/>
            <person name="Mayes R."/>
            <person name="Pettett A."/>
            <person name="Rajandream M.A."/>
            <person name="Lyne M."/>
            <person name="Benes V."/>
            <person name="Rechmann S."/>
            <person name="Borkova D."/>
            <person name="Bloecker H."/>
            <person name="Scharfe M."/>
            <person name="Grimm M."/>
            <person name="Loehnert T.-H."/>
            <person name="Dose S."/>
            <person name="de Haan M."/>
            <person name="Maarse A.C."/>
            <person name="Schaefer M."/>
            <person name="Mueller-Auer S."/>
            <person name="Gabel C."/>
            <person name="Fuchs M."/>
            <person name="Fartmann B."/>
            <person name="Granderath K."/>
            <person name="Dauner D."/>
            <person name="Herzl A."/>
            <person name="Neumann S."/>
            <person name="Argiriou A."/>
            <person name="Vitale D."/>
            <person name="Liguori R."/>
            <person name="Piravandi E."/>
            <person name="Massenet O."/>
            <person name="Quigley F."/>
            <person name="Clabauld G."/>
            <person name="Muendlein A."/>
            <person name="Felber R."/>
            <person name="Schnabl S."/>
            <person name="Hiller R."/>
            <person name="Schmidt W."/>
            <person name="Lecharny A."/>
            <person name="Aubourg S."/>
            <person name="Chefdor F."/>
            <person name="Cooke R."/>
            <person name="Berger C."/>
            <person name="Monfort A."/>
            <person name="Casacuberta E."/>
            <person name="Gibbons T."/>
            <person name="Weber N."/>
            <person name="Vandenbol M."/>
            <person name="Bargues M."/>
            <person name="Terol J."/>
            <person name="Torres A."/>
            <person name="Perez-Perez A."/>
            <person name="Purnelle B."/>
            <person name="Bent E."/>
            <person name="Johnson S."/>
            <person name="Tacon D."/>
            <person name="Jesse T."/>
            <person name="Heijnen L."/>
            <person name="Schwarz S."/>
            <person name="Scholler P."/>
            <person name="Heber S."/>
            <person name="Francs P."/>
            <person name="Bielke C."/>
            <person name="Frishman D."/>
            <person name="Haase D."/>
            <person name="Lemcke K."/>
            <person name="Mewes H.-W."/>
            <person name="Stocker S."/>
            <person name="Zaccaria P."/>
            <person name="Bevan M."/>
            <person name="Wilson R.K."/>
            <person name="de la Bastide M."/>
            <person name="Habermann K."/>
            <person name="Parnell L."/>
            <person name="Dedhia N."/>
            <person name="Gnoj L."/>
            <person name="Schutz K."/>
            <person name="Huang E."/>
            <person name="Spiegel L."/>
            <person name="Sekhon M."/>
            <person name="Murray J."/>
            <person name="Sheet P."/>
            <person name="Cordes M."/>
            <person name="Abu-Threideh J."/>
            <person name="Stoneking T."/>
            <person name="Kalicki J."/>
            <person name="Graves T."/>
            <person name="Harmon G."/>
            <person name="Edwards J."/>
            <person name="Latreille P."/>
            <person name="Courtney L."/>
            <person name="Cloud J."/>
            <person name="Abbott A."/>
            <person name="Scott K."/>
            <person name="Johnson D."/>
            <person name="Minx P."/>
            <person name="Bentley D."/>
            <person name="Fulton B."/>
            <person name="Miller N."/>
            <person name="Greco T."/>
            <person name="Kemp K."/>
            <person name="Kramer J."/>
            <person name="Fulton L."/>
            <person name="Mardis E."/>
            <person name="Dante M."/>
            <person name="Pepin K."/>
            <person name="Hillier L.W."/>
            <person name="Nelson J."/>
            <person name="Spieth J."/>
            <person name="Ryan E."/>
            <person name="Andrews S."/>
            <person name="Geisel C."/>
            <person name="Layman D."/>
            <person name="Du H."/>
            <person name="Ali J."/>
            <person name="Berghoff A."/>
            <person name="Jones K."/>
            <person name="Drone K."/>
            <person name="Cotton M."/>
            <person name="Joshu C."/>
            <person name="Antonoiu B."/>
            <person name="Zidanic M."/>
            <person name="Strong C."/>
            <person name="Sun H."/>
            <person name="Lamar B."/>
            <person name="Yordan C."/>
            <person name="Ma P."/>
            <person name="Zhong J."/>
            <person name="Preston R."/>
            <person name="Vil D."/>
            <person name="Shekher M."/>
            <person name="Matero A."/>
            <person name="Shah R."/>
            <person name="Swaby I.K."/>
            <person name="O'Shaughnessy A."/>
            <person name="Rodriguez M."/>
            <person name="Hoffman J."/>
            <person name="Till S."/>
            <person name="Granat S."/>
            <person name="Shohdy N."/>
            <person name="Hasegawa A."/>
            <person name="Hameed A."/>
            <person name="Lodhi M."/>
            <person name="Johnson A."/>
            <person name="Chen E."/>
            <person name="Marra M.A."/>
            <person name="Martienssen R."/>
            <person name="McCombie W.R."/>
        </authorList>
    </citation>
    <scope>NUCLEOTIDE SEQUENCE [LARGE SCALE GENOMIC DNA]</scope>
    <source>
        <strain>cv. Columbia</strain>
    </source>
</reference>
<reference key="2">
    <citation type="journal article" date="2017" name="Plant J.">
        <title>Araport11: a complete reannotation of the Arabidopsis thaliana reference genome.</title>
        <authorList>
            <person name="Cheng C.Y."/>
            <person name="Krishnakumar V."/>
            <person name="Chan A.P."/>
            <person name="Thibaud-Nissen F."/>
            <person name="Schobel S."/>
            <person name="Town C.D."/>
        </authorList>
    </citation>
    <scope>GENOME REANNOTATION</scope>
    <source>
        <strain>cv. Columbia</strain>
    </source>
</reference>
<reference key="3">
    <citation type="submission" date="2006-07" db="EMBL/GenBank/DDBJ databases">
        <title>Large-scale analysis of RIKEN Arabidopsis full-length (RAFL) cDNAs.</title>
        <authorList>
            <person name="Totoki Y."/>
            <person name="Seki M."/>
            <person name="Ishida J."/>
            <person name="Nakajima M."/>
            <person name="Enju A."/>
            <person name="Kamiya A."/>
            <person name="Narusaka M."/>
            <person name="Shin-i T."/>
            <person name="Nakagawa M."/>
            <person name="Sakamoto N."/>
            <person name="Oishi K."/>
            <person name="Kohara Y."/>
            <person name="Kobayashi M."/>
            <person name="Toyoda A."/>
            <person name="Sakaki Y."/>
            <person name="Sakurai T."/>
            <person name="Iida K."/>
            <person name="Akiyama K."/>
            <person name="Satou M."/>
            <person name="Toyoda T."/>
            <person name="Konagaya A."/>
            <person name="Carninci P."/>
            <person name="Kawai J."/>
            <person name="Hayashizaki Y."/>
            <person name="Shinozaki K."/>
        </authorList>
    </citation>
    <scope>NUCLEOTIDE SEQUENCE [LARGE SCALE MRNA]</scope>
    <source>
        <strain>cv. Columbia</strain>
    </source>
</reference>
<reference key="4">
    <citation type="journal article" date="2000" name="J. Cell Sci.">
        <title>A myosin family tree.</title>
        <authorList>
            <person name="Hodge T."/>
            <person name="Cope M.J."/>
        </authorList>
    </citation>
    <scope>GENE FAMILY</scope>
</reference>
<reference key="5">
    <citation type="journal article" date="2001" name="Genome Biol.">
        <title>Analysis of the myosins encoded in the recently completed Arabidopsis thaliana genome sequence.</title>
        <authorList>
            <person name="Reddy A.S."/>
            <person name="Day I.S."/>
        </authorList>
    </citation>
    <scope>GENE FAMILY</scope>
</reference>
<reference key="6">
    <citation type="journal article" date="2007" name="BMC Plant Biol.">
        <title>Association of six YFP-myosin XI-tail fusions with mobile plant cell organelles.</title>
        <authorList>
            <person name="Reisen D."/>
            <person name="Hanson M.R."/>
        </authorList>
    </citation>
    <scope>SUBCELLULAR LOCATION</scope>
</reference>
<reference key="7">
    <citation type="journal article" date="2007" name="J. Biol. Chem.">
        <title>Organelle targeting of myosin XI is mediated by two globular tail subdomains with separate cargo binding sites.</title>
        <authorList>
            <person name="Li J.F."/>
            <person name="Nebenfuehr A."/>
        </authorList>
    </citation>
    <scope>DOMAIN</scope>
    <scope>SUBCELLULAR LOCATION</scope>
</reference>
<reference key="8">
    <citation type="journal article" date="2009" name="Plant Physiol.">
        <title>A comparative study of the involvement of 17 Arabidopsis myosin family members on the motility of Golgi and other organelles.</title>
        <authorList>
            <person name="Avisar D."/>
            <person name="Abu-Abied M."/>
            <person name="Belausov E."/>
            <person name="Sadot E."/>
            <person name="Hawes C."/>
            <person name="Sparkes I.A."/>
        </authorList>
    </citation>
    <scope>FUNCTION</scope>
</reference>
<reference key="9">
    <citation type="journal article" date="2010" name="Plant Cell">
        <title>Class XI myosins are required for development, cell expansion, and F-Actin organization in Arabidopsis.</title>
        <authorList>
            <person name="Peremyslov V.V."/>
            <person name="Prokhnevsky A.I."/>
            <person name="Dolja V.V."/>
        </authorList>
    </citation>
    <scope>FUNCTION</scope>
</reference>
<reference key="10">
    <citation type="journal article" date="2011" name="Plant Physiol.">
        <title>Expression, splicing, and evolution of the myosin gene family in plants.</title>
        <authorList>
            <person name="Peremyslov V.V."/>
            <person name="Mockler T.C."/>
            <person name="Filichkin S.A."/>
            <person name="Fox S.E."/>
            <person name="Jaiswal P."/>
            <person name="Makarova K.S."/>
            <person name="Koonin E.V."/>
            <person name="Dolja V.V."/>
        </authorList>
    </citation>
    <scope>GENE FAMILY</scope>
    <scope>NOMENCLATURE</scope>
</reference>
<reference key="11">
    <citation type="journal article" date="2012" name="J. Exp. Bot.">
        <title>Myosin XIK is a major player in cytoplasm dynamics and is regulated by two amino acids in its tail.</title>
        <authorList>
            <person name="Avisar D."/>
            <person name="Abu-Abied M."/>
            <person name="Belausov E."/>
            <person name="Sadot E."/>
        </authorList>
    </citation>
    <scope>FUNCTION</scope>
</reference>
<reference key="12">
    <citation type="journal article" date="2013" name="Curr. Biol.">
        <title>Myosin XI-i links the nuclear membrane to the cytoskeleton to control nuclear movement and shape in Arabidopsis.</title>
        <authorList>
            <person name="Tamura K."/>
            <person name="Iwabuchi K."/>
            <person name="Fukao Y."/>
            <person name="Kondo M."/>
            <person name="Okamoto K."/>
            <person name="Ueda H."/>
            <person name="Nishimura M."/>
            <person name="Hara-Nishimura I."/>
        </authorList>
    </citation>
    <scope>FUNCTION</scope>
    <scope>DISRUPTION PHENOTYPE</scope>
    <scope>SUBCELLULAR LOCATION</scope>
    <scope>INTERACTION WITH WIT1 AND WIT2</scope>
</reference>
<reference key="13">
    <citation type="journal article" date="2013" name="Plant Cell">
        <title>Identification of myosin XI receptors in Arabidopsis defines a distinct class of transport vesicles.</title>
        <authorList>
            <person name="Peremyslov V.V."/>
            <person name="Morgun E.A."/>
            <person name="Kurth E.G."/>
            <person name="Makarova K.S."/>
            <person name="Koonin E.V."/>
            <person name="Dolja V.V."/>
        </authorList>
    </citation>
    <scope>INTERACTION WITH MYOB1 AND MYOB7</scope>
</reference>
<reference key="14">
    <citation type="journal article" date="2015" name="J. Exp. Bot.">
        <title>The plant nuclear envelope as a multifunctional platform LINCed by SUN and KASH.</title>
        <authorList>
            <person name="Zhou X."/>
            <person name="Graumann K."/>
            <person name="Meier I."/>
        </authorList>
    </citation>
    <scope>REVIEW</scope>
</reference>
<reference key="15">
    <citation type="journal article" date="2015" name="Nucleus">
        <title>Plant nuclear shape is independently determined by the SUN-WIP-WIT2-myosin XI-i complex and CRWN1.</title>
        <authorList>
            <person name="Zhou X."/>
            <person name="Groves N.R."/>
            <person name="Meier I."/>
        </authorList>
    </citation>
    <scope>FUNCTION</scope>
    <scope>INTERACTION WITH WIT1 AND WIT2</scope>
    <scope>SUBUNIT</scope>
</reference>
<accession>Q0WPU1</accession>
<accession>Q9SMY9</accession>
<sequence>MRNCLPMELNLRKGDKVWVEDKDLAWIAADVLDSFDNKLHVETSTGKKVFVSPEKLFRRDPDDEEHNGVDDMTKLTYLHEAGVLYNLQRRYALNDIYTYTGSILIAVNPFKKLPHLYNGHMMEQYMGAPFGELSPHVFAVSDVAYRAMIDDSRSQSILVSGESGAGKTETTKLIMQYLTFVGGRATDDDRSVEQQVLESNPLLEAFGNAKTVRNDNSSRFGKFVEIQFDTNGRISGAAIRTYLLERSRVVRITDPERNYHCFYQLCASGNDAEKYKLSNPRQFHYLNQSKTYELEGVSSAEEYKNTRRAMDIVGISQDEQEGIFRTLAAILHLGNVEFSSGREHDSSVVKDPESRHHLQMAADLFKCDANLLLASLCTRSILTREGIIIKALDPNAAVTSRDTLAKTVYAHLFDWLVDKINKSVGQDPESRFQIGVLDIYGFECFKNNSFEQFCINFANEKLQQHFNEHVFKMEQDEYRKEEINWSYIEFIDNQDVLDLIEKKPIGVIALLDEACMFPRSTHESFSMKLFQNFRFHPRLEKPKFSETDFTLSHYAGKVTYQTEAFLDKNRDYTIVEHCNLLSSSKCPFVAGIFPSAPEESTRSSYKFSSVSSRFKQQLQALMETLSKTEPHYVRCVKPNSLNRPQKFESLSVLHQLRCGGVLEAVRISLAGYPTRRNYSDFVDRFGLLAPEFMDESNDEQALTEKILSKLGLGNYQLGRTKVFLRAGQIGILDSRRAEVLDASARLIQRRLRTFVTHQNFISARASAISIQAYCRGCLSRNAYATRRNAAAAVLVQKHVRRWLSRCAFVKLVSAAIVLQSCIRADSTRLKFSHQKEHRAASLIQAHWRIHKFRSAFRHRQSSIIAIQCRWRQKLAKREFRKLKQVANEAGALRLAKTKLEKRLEDLEWRLQLEKRLRTSGEEAKSSEISKLQKTLESFSLKLDAARLATINECNKNAVLEKQLDISMKEKSAVERELNGMVELKKDNALLKNSMNSLEKKNRVLEKELLNAKTNCNNTLQKLKEAEKRCSELQTSVQSLEEKLSHLENENQVLMQKTLITSPERIGQILGEKHSSAVVPAQNDRRSVFETPTPSKHIMPFSHSLSESRRSKLTAERNLENYELLSRCIKENLGFNDDKPLAACVIYKCLLHWRAFESESTAIFNIIIEGINEALKGGDENGVLPYWLSNASALLCLLQRNLRSNSFLNASAQRSGRAAYGVKSPFKLHGPDDGASHIEARYPALLFKQQLTACVEKIYGLIRDNLKKELSPLLGSCIQAPKASRGIAGKSRSPGGVPQQSPSSQWESILKFLDSLMSRLRENHVPSFFIRKLVTQVFSFINLSLFNSLLLRRECCTFSNGEYVKSGISELEKWIANAKEEFAGTSWHELNYIRQAVGFLVIHQKKKKSLDEIRQDLCPVLTIRQIYRISTMYWDDKYGTQSVSSEVVSQMRVLVDKDNQKQTSNSFLLDDDMSIPFSAEDIDKAIPVLDPSEIEPPKFVSEYTCAQSLVKKPSIASTSKQII</sequence>
<proteinExistence type="evidence at protein level"/>
<comment type="function">
    <text evidence="9 10 11 12 14">Myosin heavy chain that is required for the cell cycle-regulated transport of various organelles and proteins for their segregation. Functions by binding with its tail domain to receptor proteins on organelles and exerting force with its N-terminal motor domain against actin filaments, thereby transporting its cargo along polarized actin cables. Involved in trafficking of Golgi stacks and mitochondria. Plays a role in nuclear shape determination. Drives nuclear movement along actin filaments (PubMed:23973298). As component of the SUN-WIP-WIT2-KAKU1 complex, mediates the transfer of cytoplasmic forces to the nuclear envelope (NE), leading to nuclear shape changes (PubMed:25759303).</text>
</comment>
<comment type="subunit">
    <text evidence="1 12 13 14">Homodimer (By similarity). Interacts with MYOB1 and MYOB7 (PubMed:23995081). Interacts with WIT1 and WIT2 (PubMed:23973298, PubMed:25759303). Core component of the LINC complex which is composed of inner nuclear membrane SUN domain-containing proteins coupled to outer nuclear membrane WIP and WIT proteins. The LINC complex also involves nucleoskeletal proteins CRWN/LINC and possibly KAKU4 and the cytoskeletal myosin KAKU1 (PubMed:25759303).</text>
</comment>
<comment type="subcellular location">
    <subcellularLocation>
        <location evidence="7 8">Cytoplasm</location>
    </subcellularLocation>
    <subcellularLocation>
        <location evidence="12">Nucleus membrane</location>
    </subcellularLocation>
    <text evidence="7 8">Colocalizes with peroxisome, cytoplasmic vesicles and/or organelles. Nucleus membrane localization is dependent of the WIT2 association.</text>
</comment>
<comment type="alternative products">
    <event type="alternative splicing"/>
    <isoform>
        <id>Q0WPU1-1</id>
        <name>1</name>
        <sequence type="displayed"/>
    </isoform>
    <text>A number of isoforms are produced. According to EST sequences.</text>
</comment>
<comment type="domain">
    <text evidence="1">IQ domain mediates interaction with calmodulin.</text>
</comment>
<comment type="domain">
    <text evidence="1">The tail domain is a globular cargo-binding domain.</text>
</comment>
<comment type="disruption phenotype">
    <text evidence="12">Impaired nuclear movement. Abnormal nucleus shape with invaginated envelope.</text>
</comment>
<comment type="similarity">
    <text evidence="16">Belongs to the TRAFAC class myosin-kinesin ATPase superfamily. Myosin family. Plant myosin class XI subfamily.</text>
</comment>
<comment type="sequence caution" evidence="16">
    <conflict type="erroneous gene model prediction">
        <sequence resource="EMBL-CDS" id="CAB36794"/>
    </conflict>
</comment>
<comment type="sequence caution" evidence="16">
    <conflict type="erroneous gene model prediction">
        <sequence resource="EMBL-CDS" id="CAB80037"/>
    </conflict>
</comment>
<protein>
    <recommendedName>
        <fullName>Myosin-15</fullName>
    </recommendedName>
    <alternativeName>
        <fullName>Myosin XI I</fullName>
        <shortName>AtXI-I</shortName>
    </alternativeName>
</protein>
<organism>
    <name type="scientific">Arabidopsis thaliana</name>
    <name type="common">Mouse-ear cress</name>
    <dbReference type="NCBI Taxonomy" id="3702"/>
    <lineage>
        <taxon>Eukaryota</taxon>
        <taxon>Viridiplantae</taxon>
        <taxon>Streptophyta</taxon>
        <taxon>Embryophyta</taxon>
        <taxon>Tracheophyta</taxon>
        <taxon>Spermatophyta</taxon>
        <taxon>Magnoliopsida</taxon>
        <taxon>eudicotyledons</taxon>
        <taxon>Gunneridae</taxon>
        <taxon>Pentapetalae</taxon>
        <taxon>rosids</taxon>
        <taxon>malvids</taxon>
        <taxon>Brassicales</taxon>
        <taxon>Brassicaceae</taxon>
        <taxon>Camelineae</taxon>
        <taxon>Arabidopsis</taxon>
    </lineage>
</organism>
<evidence type="ECO:0000250" key="1"/>
<evidence type="ECO:0000255" key="2"/>
<evidence type="ECO:0000255" key="3">
    <source>
        <dbReference type="PROSITE-ProRule" id="PRU00116"/>
    </source>
</evidence>
<evidence type="ECO:0000255" key="4">
    <source>
        <dbReference type="PROSITE-ProRule" id="PRU00503"/>
    </source>
</evidence>
<evidence type="ECO:0000255" key="5">
    <source>
        <dbReference type="PROSITE-ProRule" id="PRU00782"/>
    </source>
</evidence>
<evidence type="ECO:0000255" key="6">
    <source>
        <dbReference type="PROSITE-ProRule" id="PRU01190"/>
    </source>
</evidence>
<evidence type="ECO:0000269" key="7">
    <source>
    </source>
</evidence>
<evidence type="ECO:0000269" key="8">
    <source>
    </source>
</evidence>
<evidence type="ECO:0000269" key="9">
    <source>
    </source>
</evidence>
<evidence type="ECO:0000269" key="10">
    <source>
    </source>
</evidence>
<evidence type="ECO:0000269" key="11">
    <source>
    </source>
</evidence>
<evidence type="ECO:0000269" key="12">
    <source>
    </source>
</evidence>
<evidence type="ECO:0000269" key="13">
    <source>
    </source>
</evidence>
<evidence type="ECO:0000269" key="14">
    <source>
    </source>
</evidence>
<evidence type="ECO:0000303" key="15">
    <source>
    </source>
</evidence>
<evidence type="ECO:0000305" key="16"/>
<evidence type="ECO:0000312" key="17">
    <source>
        <dbReference type="Araport" id="AT4G33200"/>
    </source>
</evidence>
<evidence type="ECO:0000312" key="18">
    <source>
        <dbReference type="EMBL" id="CAB36794.2"/>
    </source>
</evidence>
<feature type="chain" id="PRO_0000422870" description="Myosin-15">
    <location>
        <begin position="1"/>
        <end position="1522"/>
    </location>
</feature>
<feature type="domain" description="Myosin N-terminal SH3-like" evidence="6">
    <location>
        <begin position="12"/>
        <end position="61"/>
    </location>
</feature>
<feature type="domain" description="Myosin motor" evidence="5">
    <location>
        <begin position="67"/>
        <end position="737"/>
    </location>
</feature>
<feature type="domain" description="IQ 1" evidence="3">
    <location>
        <begin position="763"/>
        <end position="792"/>
    </location>
</feature>
<feature type="domain" description="IQ 2" evidence="3">
    <location>
        <begin position="788"/>
        <end position="817"/>
    </location>
</feature>
<feature type="domain" description="IQ 3" evidence="3">
    <location>
        <begin position="811"/>
        <end position="840"/>
    </location>
</feature>
<feature type="domain" description="IQ 4" evidence="3">
    <location>
        <begin position="836"/>
        <end position="865"/>
    </location>
</feature>
<feature type="domain" description="IQ 5" evidence="3">
    <location>
        <begin position="859"/>
        <end position="888"/>
    </location>
</feature>
<feature type="domain" description="Dilute" evidence="4">
    <location>
        <begin position="1164"/>
        <end position="1456"/>
    </location>
</feature>
<feature type="region of interest" description="Actin-binding" evidence="2">
    <location>
        <begin position="499"/>
        <end position="533"/>
    </location>
</feature>
<feature type="region of interest" description="Actin-binding" evidence="2">
    <location>
        <begin position="535"/>
        <end position="558"/>
    </location>
</feature>
<feature type="region of interest" description="Actin-binding" evidence="2">
    <location>
        <begin position="593"/>
        <end position="618"/>
    </location>
</feature>
<feature type="region of interest" description="Actin-binding" evidence="1">
    <location>
        <begin position="618"/>
        <end position="640"/>
    </location>
</feature>
<feature type="coiled-coil region" evidence="2">
    <location>
        <begin position="889"/>
        <end position="1059"/>
    </location>
</feature>
<feature type="binding site" evidence="2">
    <location>
        <begin position="161"/>
        <end position="168"/>
    </location>
    <ligand>
        <name>ATP</name>
        <dbReference type="ChEBI" id="CHEBI:30616"/>
    </ligand>
</feature>
<feature type="binding site" evidence="2">
    <location>
        <begin position="214"/>
        <end position="222"/>
    </location>
    <ligand>
        <name>ATP</name>
        <dbReference type="ChEBI" id="CHEBI:30616"/>
    </ligand>
</feature>